<organism>
    <name type="scientific">Calliphora vomitoria</name>
    <name type="common">Blue bottle fly</name>
    <name type="synonym">Musca vomitoria</name>
    <dbReference type="NCBI Taxonomy" id="27454"/>
    <lineage>
        <taxon>Eukaryota</taxon>
        <taxon>Metazoa</taxon>
        <taxon>Ecdysozoa</taxon>
        <taxon>Arthropoda</taxon>
        <taxon>Hexapoda</taxon>
        <taxon>Insecta</taxon>
        <taxon>Pterygota</taxon>
        <taxon>Neoptera</taxon>
        <taxon>Endopterygota</taxon>
        <taxon>Diptera</taxon>
        <taxon>Brachycera</taxon>
        <taxon>Muscomorpha</taxon>
        <taxon>Oestroidea</taxon>
        <taxon>Calliphoridae</taxon>
        <taxon>Calliphorinae</taxon>
        <taxon>Calliphora</taxon>
    </lineage>
</organism>
<evidence type="ECO:0000269" key="1">
    <source>
    </source>
</evidence>
<evidence type="ECO:0000305" key="2"/>
<reference key="1">
    <citation type="journal article" date="1992" name="Proc. Natl. Acad. Sci. U.S.A.">
        <title>Isolation, structure, and activity of -Phe-Met-Arg-Phe-NH2 neuropeptides (designated calliFMRFamides) from the blowfly Calliphora vomitoria.</title>
        <authorList>
            <person name="Duve H."/>
            <person name="Johnsen A.H."/>
            <person name="Sewell J.C."/>
            <person name="Scott A.G."/>
            <person name="Orchard I."/>
            <person name="Rehfeld J.F."/>
            <person name="Thorpe A."/>
        </authorList>
    </citation>
    <scope>PROTEIN SEQUENCE</scope>
    <scope>AMIDATION AT PHE-9</scope>
    <source>
        <tissue>Thoracic ganglion</tissue>
    </source>
</reference>
<accession>P41868</accession>
<comment type="subcellular location">
    <subcellularLocation>
        <location>Secreted</location>
    </subcellularLocation>
</comment>
<comment type="similarity">
    <text evidence="2">Belongs to the FARP (FMRFamide related peptide) family.</text>
</comment>
<name>FARD_CALVO</name>
<sequence length="9" mass="1028">AGQDGFMRF</sequence>
<proteinExistence type="evidence at protein level"/>
<feature type="peptide" id="PRO_0000043675" description="CalliFMRFamide-13">
    <location>
        <begin position="1"/>
        <end position="9"/>
    </location>
</feature>
<feature type="modified residue" description="Phenylalanine amide" evidence="1">
    <location>
        <position position="9"/>
    </location>
</feature>
<keyword id="KW-0027">Amidation</keyword>
<keyword id="KW-0903">Direct protein sequencing</keyword>
<keyword id="KW-0527">Neuropeptide</keyword>
<keyword id="KW-0964">Secreted</keyword>
<dbReference type="PIR" id="D44787">
    <property type="entry name" value="D44787"/>
</dbReference>
<dbReference type="GO" id="GO:0005576">
    <property type="term" value="C:extracellular region"/>
    <property type="evidence" value="ECO:0007669"/>
    <property type="project" value="UniProtKB-SubCell"/>
</dbReference>
<dbReference type="GO" id="GO:0007218">
    <property type="term" value="P:neuropeptide signaling pathway"/>
    <property type="evidence" value="ECO:0007669"/>
    <property type="project" value="UniProtKB-KW"/>
</dbReference>
<protein>
    <recommendedName>
        <fullName>CalliFMRFamide-13</fullName>
    </recommendedName>
</protein>